<name>PXPA_STAAM</name>
<gene>
    <name evidence="1" type="primary">pxpA</name>
    <name type="ordered locus">SAV1605</name>
</gene>
<keyword id="KW-0067">ATP-binding</keyword>
<keyword id="KW-0378">Hydrolase</keyword>
<keyword id="KW-0547">Nucleotide-binding</keyword>
<proteinExistence type="inferred from homology"/>
<accession>P67622</accession>
<accession>Q99TP4</accession>
<sequence length="250" mass="27462">MRVDLNCDLGEAFGNYSFGGDHQIIPLITSANVACGFHAGDENVMNETVKLAKAHNVAVGAHPGLPDLKGFGRRNIDISNDEIYNLMIYQLGALQGFCRIHQLKINHVKPHGALYQMGAKDREIANVIAQAVYDFDPSLVLVGLANSYLISEAKNVGLITASEVFADRRYEDDGQLVSRKESDAVITDTDEALKQVLKMVKENKVISKNNKEVTLQADTICVHGDGEHALLFVSKIREILMKEGIDIQSL</sequence>
<organism>
    <name type="scientific">Staphylococcus aureus (strain Mu50 / ATCC 700699)</name>
    <dbReference type="NCBI Taxonomy" id="158878"/>
    <lineage>
        <taxon>Bacteria</taxon>
        <taxon>Bacillati</taxon>
        <taxon>Bacillota</taxon>
        <taxon>Bacilli</taxon>
        <taxon>Bacillales</taxon>
        <taxon>Staphylococcaceae</taxon>
        <taxon>Staphylococcus</taxon>
    </lineage>
</organism>
<dbReference type="EC" id="3.5.2.9" evidence="1"/>
<dbReference type="EMBL" id="BA000017">
    <property type="protein sequence ID" value="BAB57767.1"/>
    <property type="molecule type" value="Genomic_DNA"/>
</dbReference>
<dbReference type="RefSeq" id="WP_001261793.1">
    <property type="nucleotide sequence ID" value="NC_002758.2"/>
</dbReference>
<dbReference type="SMR" id="P67622"/>
<dbReference type="KEGG" id="sav:SAV1605"/>
<dbReference type="HOGENOM" id="CLU_069535_0_0_9"/>
<dbReference type="PhylomeDB" id="P67622"/>
<dbReference type="Proteomes" id="UP000002481">
    <property type="component" value="Chromosome"/>
</dbReference>
<dbReference type="GO" id="GO:0017168">
    <property type="term" value="F:5-oxoprolinase (ATP-hydrolyzing) activity"/>
    <property type="evidence" value="ECO:0007669"/>
    <property type="project" value="UniProtKB-UniRule"/>
</dbReference>
<dbReference type="GO" id="GO:0005524">
    <property type="term" value="F:ATP binding"/>
    <property type="evidence" value="ECO:0007669"/>
    <property type="project" value="UniProtKB-UniRule"/>
</dbReference>
<dbReference type="GO" id="GO:0005975">
    <property type="term" value="P:carbohydrate metabolic process"/>
    <property type="evidence" value="ECO:0007669"/>
    <property type="project" value="InterPro"/>
</dbReference>
<dbReference type="CDD" id="cd10787">
    <property type="entry name" value="LamB_YcsF_like"/>
    <property type="match status" value="1"/>
</dbReference>
<dbReference type="Gene3D" id="3.20.20.370">
    <property type="entry name" value="Glycoside hydrolase/deacetylase"/>
    <property type="match status" value="1"/>
</dbReference>
<dbReference type="HAMAP" id="MF_00691">
    <property type="entry name" value="PxpA"/>
    <property type="match status" value="1"/>
</dbReference>
<dbReference type="InterPro" id="IPR011330">
    <property type="entry name" value="Glyco_hydro/deAcase_b/a-brl"/>
</dbReference>
<dbReference type="InterPro" id="IPR005501">
    <property type="entry name" value="LamB/YcsF/PxpA-like"/>
</dbReference>
<dbReference type="NCBIfam" id="NF003813">
    <property type="entry name" value="PRK05406.1-2"/>
    <property type="match status" value="1"/>
</dbReference>
<dbReference type="NCBIfam" id="NF003814">
    <property type="entry name" value="PRK05406.1-3"/>
    <property type="match status" value="1"/>
</dbReference>
<dbReference type="NCBIfam" id="NF003816">
    <property type="entry name" value="PRK05406.1-5"/>
    <property type="match status" value="1"/>
</dbReference>
<dbReference type="PANTHER" id="PTHR30292:SF0">
    <property type="entry name" value="5-OXOPROLINASE SUBUNIT A"/>
    <property type="match status" value="1"/>
</dbReference>
<dbReference type="PANTHER" id="PTHR30292">
    <property type="entry name" value="UNCHARACTERIZED PROTEIN YBGL-RELATED"/>
    <property type="match status" value="1"/>
</dbReference>
<dbReference type="Pfam" id="PF03746">
    <property type="entry name" value="LamB_YcsF"/>
    <property type="match status" value="1"/>
</dbReference>
<dbReference type="SUPFAM" id="SSF88713">
    <property type="entry name" value="Glycoside hydrolase/deacetylase"/>
    <property type="match status" value="1"/>
</dbReference>
<evidence type="ECO:0000255" key="1">
    <source>
        <dbReference type="HAMAP-Rule" id="MF_00691"/>
    </source>
</evidence>
<reference key="1">
    <citation type="journal article" date="2001" name="Lancet">
        <title>Whole genome sequencing of meticillin-resistant Staphylococcus aureus.</title>
        <authorList>
            <person name="Kuroda M."/>
            <person name="Ohta T."/>
            <person name="Uchiyama I."/>
            <person name="Baba T."/>
            <person name="Yuzawa H."/>
            <person name="Kobayashi I."/>
            <person name="Cui L."/>
            <person name="Oguchi A."/>
            <person name="Aoki K."/>
            <person name="Nagai Y."/>
            <person name="Lian J.-Q."/>
            <person name="Ito T."/>
            <person name="Kanamori M."/>
            <person name="Matsumaru H."/>
            <person name="Maruyama A."/>
            <person name="Murakami H."/>
            <person name="Hosoyama A."/>
            <person name="Mizutani-Ui Y."/>
            <person name="Takahashi N.K."/>
            <person name="Sawano T."/>
            <person name="Inoue R."/>
            <person name="Kaito C."/>
            <person name="Sekimizu K."/>
            <person name="Hirakawa H."/>
            <person name="Kuhara S."/>
            <person name="Goto S."/>
            <person name="Yabuzaki J."/>
            <person name="Kanehisa M."/>
            <person name="Yamashita A."/>
            <person name="Oshima K."/>
            <person name="Furuya K."/>
            <person name="Yoshino C."/>
            <person name="Shiba T."/>
            <person name="Hattori M."/>
            <person name="Ogasawara N."/>
            <person name="Hayashi H."/>
            <person name="Hiramatsu K."/>
        </authorList>
    </citation>
    <scope>NUCLEOTIDE SEQUENCE [LARGE SCALE GENOMIC DNA]</scope>
    <source>
        <strain>Mu50 / ATCC 700699</strain>
    </source>
</reference>
<feature type="chain" id="PRO_0000185044" description="5-oxoprolinase subunit A">
    <location>
        <begin position="1"/>
        <end position="250"/>
    </location>
</feature>
<protein>
    <recommendedName>
        <fullName evidence="1">5-oxoprolinase subunit A</fullName>
        <shortName evidence="1">5-OPase subunit A</shortName>
        <ecNumber evidence="1">3.5.2.9</ecNumber>
    </recommendedName>
    <alternativeName>
        <fullName evidence="1">5-oxoprolinase (ATP-hydrolyzing) subunit A</fullName>
    </alternativeName>
</protein>
<comment type="function">
    <text evidence="1">Catalyzes the cleavage of 5-oxoproline to form L-glutamate coupled to the hydrolysis of ATP to ADP and inorganic phosphate.</text>
</comment>
<comment type="catalytic activity">
    <reaction evidence="1">
        <text>5-oxo-L-proline + ATP + 2 H2O = L-glutamate + ADP + phosphate + H(+)</text>
        <dbReference type="Rhea" id="RHEA:10348"/>
        <dbReference type="ChEBI" id="CHEBI:15377"/>
        <dbReference type="ChEBI" id="CHEBI:15378"/>
        <dbReference type="ChEBI" id="CHEBI:29985"/>
        <dbReference type="ChEBI" id="CHEBI:30616"/>
        <dbReference type="ChEBI" id="CHEBI:43474"/>
        <dbReference type="ChEBI" id="CHEBI:58402"/>
        <dbReference type="ChEBI" id="CHEBI:456216"/>
        <dbReference type="EC" id="3.5.2.9"/>
    </reaction>
</comment>
<comment type="subunit">
    <text evidence="1">Forms a complex composed of PxpA, PxpB and PxpC.</text>
</comment>
<comment type="similarity">
    <text evidence="1">Belongs to the LamB/PxpA family.</text>
</comment>